<dbReference type="EC" id="5.1.1.1" evidence="1"/>
<dbReference type="EMBL" id="CP000419">
    <property type="protein sequence ID" value="ABJ66844.1"/>
    <property type="molecule type" value="Genomic_DNA"/>
</dbReference>
<dbReference type="RefSeq" id="WP_011681611.1">
    <property type="nucleotide sequence ID" value="NZ_CP086001.1"/>
</dbReference>
<dbReference type="SMR" id="Q03IX8"/>
<dbReference type="KEGG" id="ste:STER_1701"/>
<dbReference type="HOGENOM" id="CLU_028393_2_1_9"/>
<dbReference type="UniPathway" id="UPA00042">
    <property type="reaction ID" value="UER00497"/>
</dbReference>
<dbReference type="GO" id="GO:0005829">
    <property type="term" value="C:cytosol"/>
    <property type="evidence" value="ECO:0007669"/>
    <property type="project" value="TreeGrafter"/>
</dbReference>
<dbReference type="GO" id="GO:0008784">
    <property type="term" value="F:alanine racemase activity"/>
    <property type="evidence" value="ECO:0007669"/>
    <property type="project" value="UniProtKB-UniRule"/>
</dbReference>
<dbReference type="GO" id="GO:0030170">
    <property type="term" value="F:pyridoxal phosphate binding"/>
    <property type="evidence" value="ECO:0007669"/>
    <property type="project" value="UniProtKB-UniRule"/>
</dbReference>
<dbReference type="GO" id="GO:0030632">
    <property type="term" value="P:D-alanine biosynthetic process"/>
    <property type="evidence" value="ECO:0007669"/>
    <property type="project" value="UniProtKB-UniRule"/>
</dbReference>
<dbReference type="GO" id="GO:0009252">
    <property type="term" value="P:peptidoglycan biosynthetic process"/>
    <property type="evidence" value="ECO:0007669"/>
    <property type="project" value="TreeGrafter"/>
</dbReference>
<dbReference type="CDD" id="cd00430">
    <property type="entry name" value="PLPDE_III_AR"/>
    <property type="match status" value="1"/>
</dbReference>
<dbReference type="FunFam" id="2.40.37.10:FF:000006">
    <property type="entry name" value="Alanine racemase"/>
    <property type="match status" value="1"/>
</dbReference>
<dbReference type="FunFam" id="3.20.20.10:FF:000002">
    <property type="entry name" value="Alanine racemase"/>
    <property type="match status" value="1"/>
</dbReference>
<dbReference type="Gene3D" id="3.20.20.10">
    <property type="entry name" value="Alanine racemase"/>
    <property type="match status" value="1"/>
</dbReference>
<dbReference type="Gene3D" id="2.40.37.10">
    <property type="entry name" value="Lyase, Ornithine Decarboxylase, Chain A, domain 1"/>
    <property type="match status" value="1"/>
</dbReference>
<dbReference type="HAMAP" id="MF_01201">
    <property type="entry name" value="Ala_racemase"/>
    <property type="match status" value="1"/>
</dbReference>
<dbReference type="InterPro" id="IPR000821">
    <property type="entry name" value="Ala_racemase"/>
</dbReference>
<dbReference type="InterPro" id="IPR009006">
    <property type="entry name" value="Ala_racemase/Decarboxylase_C"/>
</dbReference>
<dbReference type="InterPro" id="IPR011079">
    <property type="entry name" value="Ala_racemase_C"/>
</dbReference>
<dbReference type="InterPro" id="IPR001608">
    <property type="entry name" value="Ala_racemase_N"/>
</dbReference>
<dbReference type="InterPro" id="IPR020622">
    <property type="entry name" value="Ala_racemase_pyridoxalP-BS"/>
</dbReference>
<dbReference type="InterPro" id="IPR029066">
    <property type="entry name" value="PLP-binding_barrel"/>
</dbReference>
<dbReference type="NCBIfam" id="TIGR00492">
    <property type="entry name" value="alr"/>
    <property type="match status" value="1"/>
</dbReference>
<dbReference type="PANTHER" id="PTHR30511">
    <property type="entry name" value="ALANINE RACEMASE"/>
    <property type="match status" value="1"/>
</dbReference>
<dbReference type="PANTHER" id="PTHR30511:SF0">
    <property type="entry name" value="ALANINE RACEMASE, CATABOLIC-RELATED"/>
    <property type="match status" value="1"/>
</dbReference>
<dbReference type="Pfam" id="PF00842">
    <property type="entry name" value="Ala_racemase_C"/>
    <property type="match status" value="1"/>
</dbReference>
<dbReference type="Pfam" id="PF01168">
    <property type="entry name" value="Ala_racemase_N"/>
    <property type="match status" value="1"/>
</dbReference>
<dbReference type="PRINTS" id="PR00992">
    <property type="entry name" value="ALARACEMASE"/>
</dbReference>
<dbReference type="SMART" id="SM01005">
    <property type="entry name" value="Ala_racemase_C"/>
    <property type="match status" value="1"/>
</dbReference>
<dbReference type="SUPFAM" id="SSF50621">
    <property type="entry name" value="Alanine racemase C-terminal domain-like"/>
    <property type="match status" value="1"/>
</dbReference>
<dbReference type="SUPFAM" id="SSF51419">
    <property type="entry name" value="PLP-binding barrel"/>
    <property type="match status" value="1"/>
</dbReference>
<dbReference type="PROSITE" id="PS00395">
    <property type="entry name" value="ALANINE_RACEMASE"/>
    <property type="match status" value="1"/>
</dbReference>
<keyword id="KW-0413">Isomerase</keyword>
<keyword id="KW-0663">Pyridoxal phosphate</keyword>
<sequence>MIASLHRPTLAKVDLSAISENIEQVVSHIPKQVQTFAVVKANAYGHGAVEVAKHVSKQVDGFCVSNLDEALELRQAGIEQPILILGVVLPDGVPLAIQENISLTVASLEWLALAQKQGLDLIGLTCHIKVDSGMGRIGVRNLKDADNLIAGLKALGADVEGIFTHFATADEADDSKFKRQLSFFTDLVDNLTDRPRLVHASNSATSIWHAATVFNTVRLGVVIYGLNPSGSVLELPYNIQPALSLETALIHVKTLPAGQDVGYGATYTTTAEEVIGTLPIGYADGWTRDLQGFHVIVDGQLCPIVGRVSMDQITVRLPKVYPLGTPVTLMGENGGASITATEVAEKRGTINYEVLCLLSDRVPRSYD</sequence>
<evidence type="ECO:0000255" key="1">
    <source>
        <dbReference type="HAMAP-Rule" id="MF_01201"/>
    </source>
</evidence>
<organism>
    <name type="scientific">Streptococcus thermophilus (strain ATCC BAA-491 / LMD-9)</name>
    <dbReference type="NCBI Taxonomy" id="322159"/>
    <lineage>
        <taxon>Bacteria</taxon>
        <taxon>Bacillati</taxon>
        <taxon>Bacillota</taxon>
        <taxon>Bacilli</taxon>
        <taxon>Lactobacillales</taxon>
        <taxon>Streptococcaceae</taxon>
        <taxon>Streptococcus</taxon>
    </lineage>
</organism>
<comment type="function">
    <text evidence="1">Catalyzes the interconversion of L-alanine and D-alanine. May also act on other amino acids.</text>
</comment>
<comment type="catalytic activity">
    <reaction evidence="1">
        <text>L-alanine = D-alanine</text>
        <dbReference type="Rhea" id="RHEA:20249"/>
        <dbReference type="ChEBI" id="CHEBI:57416"/>
        <dbReference type="ChEBI" id="CHEBI:57972"/>
        <dbReference type="EC" id="5.1.1.1"/>
    </reaction>
</comment>
<comment type="cofactor">
    <cofactor evidence="1">
        <name>pyridoxal 5'-phosphate</name>
        <dbReference type="ChEBI" id="CHEBI:597326"/>
    </cofactor>
</comment>
<comment type="pathway">
    <text evidence="1">Amino-acid biosynthesis; D-alanine biosynthesis; D-alanine from L-alanine: step 1/1.</text>
</comment>
<comment type="similarity">
    <text evidence="1">Belongs to the alanine racemase family.</text>
</comment>
<name>ALR_STRTD</name>
<gene>
    <name type="primary">alr</name>
    <name type="ordered locus">STER_1701</name>
</gene>
<feature type="chain" id="PRO_1000066056" description="Alanine racemase">
    <location>
        <begin position="1"/>
        <end position="367"/>
    </location>
</feature>
<feature type="active site" description="Proton acceptor; specific for D-alanine" evidence="1">
    <location>
        <position position="40"/>
    </location>
</feature>
<feature type="active site" description="Proton acceptor; specific for L-alanine" evidence="1">
    <location>
        <position position="263"/>
    </location>
</feature>
<feature type="binding site" evidence="1">
    <location>
        <position position="136"/>
    </location>
    <ligand>
        <name>substrate</name>
    </ligand>
</feature>
<feature type="binding site" evidence="1">
    <location>
        <position position="310"/>
    </location>
    <ligand>
        <name>substrate</name>
    </ligand>
</feature>
<feature type="modified residue" description="N6-(pyridoxal phosphate)lysine" evidence="1">
    <location>
        <position position="40"/>
    </location>
</feature>
<accession>Q03IX8</accession>
<proteinExistence type="inferred from homology"/>
<protein>
    <recommendedName>
        <fullName evidence="1">Alanine racemase</fullName>
        <ecNumber evidence="1">5.1.1.1</ecNumber>
    </recommendedName>
</protein>
<reference key="1">
    <citation type="journal article" date="2006" name="Proc. Natl. Acad. Sci. U.S.A.">
        <title>Comparative genomics of the lactic acid bacteria.</title>
        <authorList>
            <person name="Makarova K.S."/>
            <person name="Slesarev A."/>
            <person name="Wolf Y.I."/>
            <person name="Sorokin A."/>
            <person name="Mirkin B."/>
            <person name="Koonin E.V."/>
            <person name="Pavlov A."/>
            <person name="Pavlova N."/>
            <person name="Karamychev V."/>
            <person name="Polouchine N."/>
            <person name="Shakhova V."/>
            <person name="Grigoriev I."/>
            <person name="Lou Y."/>
            <person name="Rohksar D."/>
            <person name="Lucas S."/>
            <person name="Huang K."/>
            <person name="Goodstein D.M."/>
            <person name="Hawkins T."/>
            <person name="Plengvidhya V."/>
            <person name="Welker D."/>
            <person name="Hughes J."/>
            <person name="Goh Y."/>
            <person name="Benson A."/>
            <person name="Baldwin K."/>
            <person name="Lee J.-H."/>
            <person name="Diaz-Muniz I."/>
            <person name="Dosti B."/>
            <person name="Smeianov V."/>
            <person name="Wechter W."/>
            <person name="Barabote R."/>
            <person name="Lorca G."/>
            <person name="Altermann E."/>
            <person name="Barrangou R."/>
            <person name="Ganesan B."/>
            <person name="Xie Y."/>
            <person name="Rawsthorne H."/>
            <person name="Tamir D."/>
            <person name="Parker C."/>
            <person name="Breidt F."/>
            <person name="Broadbent J.R."/>
            <person name="Hutkins R."/>
            <person name="O'Sullivan D."/>
            <person name="Steele J."/>
            <person name="Unlu G."/>
            <person name="Saier M.H. Jr."/>
            <person name="Klaenhammer T."/>
            <person name="Richardson P."/>
            <person name="Kozyavkin S."/>
            <person name="Weimer B.C."/>
            <person name="Mills D.A."/>
        </authorList>
    </citation>
    <scope>NUCLEOTIDE SEQUENCE [LARGE SCALE GENOMIC DNA]</scope>
    <source>
        <strain>ATCC BAA-491 / LMD-9</strain>
    </source>
</reference>